<gene>
    <name evidence="1" type="primary">htpX</name>
    <name type="ordered locus">EcolC_1803</name>
</gene>
<keyword id="KW-0997">Cell inner membrane</keyword>
<keyword id="KW-1003">Cell membrane</keyword>
<keyword id="KW-0378">Hydrolase</keyword>
<keyword id="KW-0472">Membrane</keyword>
<keyword id="KW-0479">Metal-binding</keyword>
<keyword id="KW-0482">Metalloprotease</keyword>
<keyword id="KW-0645">Protease</keyword>
<keyword id="KW-0812">Transmembrane</keyword>
<keyword id="KW-1133">Transmembrane helix</keyword>
<keyword id="KW-0862">Zinc</keyword>
<name>HTPX_ECOLC</name>
<organism>
    <name type="scientific">Escherichia coli (strain ATCC 8739 / DSM 1576 / NBRC 3972 / NCIMB 8545 / WDCM 00012 / Crooks)</name>
    <dbReference type="NCBI Taxonomy" id="481805"/>
    <lineage>
        <taxon>Bacteria</taxon>
        <taxon>Pseudomonadati</taxon>
        <taxon>Pseudomonadota</taxon>
        <taxon>Gammaproteobacteria</taxon>
        <taxon>Enterobacterales</taxon>
        <taxon>Enterobacteriaceae</taxon>
        <taxon>Escherichia</taxon>
    </lineage>
</organism>
<feature type="chain" id="PRO_1000077463" description="Protease HtpX">
    <location>
        <begin position="1"/>
        <end position="293"/>
    </location>
</feature>
<feature type="transmembrane region" description="Helical" evidence="1">
    <location>
        <begin position="4"/>
        <end position="24"/>
    </location>
</feature>
<feature type="transmembrane region" description="Helical" evidence="1">
    <location>
        <begin position="34"/>
        <end position="54"/>
    </location>
</feature>
<feature type="transmembrane region" description="Helical" evidence="1">
    <location>
        <begin position="158"/>
        <end position="178"/>
    </location>
</feature>
<feature type="transmembrane region" description="Helical" evidence="1">
    <location>
        <begin position="193"/>
        <end position="213"/>
    </location>
</feature>
<feature type="active site" evidence="1">
    <location>
        <position position="140"/>
    </location>
</feature>
<feature type="binding site" evidence="1">
    <location>
        <position position="139"/>
    </location>
    <ligand>
        <name>Zn(2+)</name>
        <dbReference type="ChEBI" id="CHEBI:29105"/>
        <note>catalytic</note>
    </ligand>
</feature>
<feature type="binding site" evidence="1">
    <location>
        <position position="143"/>
    </location>
    <ligand>
        <name>Zn(2+)</name>
        <dbReference type="ChEBI" id="CHEBI:29105"/>
        <note>catalytic</note>
    </ligand>
</feature>
<feature type="binding site" evidence="1">
    <location>
        <position position="222"/>
    </location>
    <ligand>
        <name>Zn(2+)</name>
        <dbReference type="ChEBI" id="CHEBI:29105"/>
        <note>catalytic</note>
    </ligand>
</feature>
<protein>
    <recommendedName>
        <fullName evidence="1">Protease HtpX</fullName>
        <ecNumber evidence="1">3.4.24.-</ecNumber>
    </recommendedName>
    <alternativeName>
        <fullName evidence="1">Heat shock protein HtpX</fullName>
    </alternativeName>
</protein>
<evidence type="ECO:0000255" key="1">
    <source>
        <dbReference type="HAMAP-Rule" id="MF_00188"/>
    </source>
</evidence>
<comment type="cofactor">
    <cofactor evidence="1">
        <name>Zn(2+)</name>
        <dbReference type="ChEBI" id="CHEBI:29105"/>
    </cofactor>
    <text evidence="1">Binds 1 zinc ion per subunit.</text>
</comment>
<comment type="subcellular location">
    <subcellularLocation>
        <location evidence="1">Cell inner membrane</location>
        <topology evidence="1">Multi-pass membrane protein</topology>
    </subcellularLocation>
</comment>
<comment type="similarity">
    <text evidence="1">Belongs to the peptidase M48B family.</text>
</comment>
<dbReference type="EC" id="3.4.24.-" evidence="1"/>
<dbReference type="EMBL" id="CP000946">
    <property type="protein sequence ID" value="ACA77453.1"/>
    <property type="molecule type" value="Genomic_DNA"/>
</dbReference>
<dbReference type="RefSeq" id="WP_000984517.1">
    <property type="nucleotide sequence ID" value="NZ_MTFT01000011.1"/>
</dbReference>
<dbReference type="SMR" id="B1J0Q9"/>
<dbReference type="MEROPS" id="M48.002"/>
<dbReference type="GeneID" id="93776079"/>
<dbReference type="KEGG" id="ecl:EcolC_1803"/>
<dbReference type="HOGENOM" id="CLU_042266_1_0_6"/>
<dbReference type="GO" id="GO:0005886">
    <property type="term" value="C:plasma membrane"/>
    <property type="evidence" value="ECO:0007669"/>
    <property type="project" value="UniProtKB-SubCell"/>
</dbReference>
<dbReference type="GO" id="GO:0004222">
    <property type="term" value="F:metalloendopeptidase activity"/>
    <property type="evidence" value="ECO:0007669"/>
    <property type="project" value="UniProtKB-UniRule"/>
</dbReference>
<dbReference type="GO" id="GO:0008270">
    <property type="term" value="F:zinc ion binding"/>
    <property type="evidence" value="ECO:0007669"/>
    <property type="project" value="UniProtKB-UniRule"/>
</dbReference>
<dbReference type="GO" id="GO:0006508">
    <property type="term" value="P:proteolysis"/>
    <property type="evidence" value="ECO:0007669"/>
    <property type="project" value="UniProtKB-KW"/>
</dbReference>
<dbReference type="CDD" id="cd07335">
    <property type="entry name" value="M48B_HtpX_like"/>
    <property type="match status" value="1"/>
</dbReference>
<dbReference type="FunFam" id="3.30.2010.10:FF:000001">
    <property type="entry name" value="Protease HtpX"/>
    <property type="match status" value="1"/>
</dbReference>
<dbReference type="Gene3D" id="3.30.2010.10">
    <property type="entry name" value="Metalloproteases ('zincins'), catalytic domain"/>
    <property type="match status" value="1"/>
</dbReference>
<dbReference type="HAMAP" id="MF_00188">
    <property type="entry name" value="Pept_M48_protease_HtpX"/>
    <property type="match status" value="1"/>
</dbReference>
<dbReference type="InterPro" id="IPR050083">
    <property type="entry name" value="HtpX_protease"/>
</dbReference>
<dbReference type="InterPro" id="IPR022919">
    <property type="entry name" value="Pept_M48_protease_HtpX"/>
</dbReference>
<dbReference type="InterPro" id="IPR001915">
    <property type="entry name" value="Peptidase_M48"/>
</dbReference>
<dbReference type="NCBIfam" id="NF003965">
    <property type="entry name" value="PRK05457.1"/>
    <property type="match status" value="1"/>
</dbReference>
<dbReference type="PANTHER" id="PTHR43221">
    <property type="entry name" value="PROTEASE HTPX"/>
    <property type="match status" value="1"/>
</dbReference>
<dbReference type="PANTHER" id="PTHR43221:SF1">
    <property type="entry name" value="PROTEASE HTPX"/>
    <property type="match status" value="1"/>
</dbReference>
<dbReference type="Pfam" id="PF01435">
    <property type="entry name" value="Peptidase_M48"/>
    <property type="match status" value="1"/>
</dbReference>
<proteinExistence type="inferred from homology"/>
<sequence length="293" mass="31957">MMRIALFLLTNLAVMVVFGLVLSLTGIQSSSVQGLMIMALLFGFGGSFVSLLMSKWMALRSVGGEVIEQPRNERERWLVNTVATQARQAGIAMPQVAIYHAPDINAFATGARRDASLVAVSTGLLQNMSPDEAEAVIAHEISHIANGDMVTMTLIQGVVNTFVIFISRILAQLAAGFMGGNRDEGEESNGNPLIYFAVATVLELVFGILASIITMWFSRHREFHADAGSAKLVGREKMIAALQRLKTSYEPQEATSMMAFCINGKSKSLSELFMTHPPLDKRIEALRTGEYLK</sequence>
<accession>B1J0Q9</accession>
<reference key="1">
    <citation type="submission" date="2008-02" db="EMBL/GenBank/DDBJ databases">
        <title>Complete sequence of Escherichia coli C str. ATCC 8739.</title>
        <authorList>
            <person name="Copeland A."/>
            <person name="Lucas S."/>
            <person name="Lapidus A."/>
            <person name="Glavina del Rio T."/>
            <person name="Dalin E."/>
            <person name="Tice H."/>
            <person name="Bruce D."/>
            <person name="Goodwin L."/>
            <person name="Pitluck S."/>
            <person name="Kiss H."/>
            <person name="Brettin T."/>
            <person name="Detter J.C."/>
            <person name="Han C."/>
            <person name="Kuske C.R."/>
            <person name="Schmutz J."/>
            <person name="Larimer F."/>
            <person name="Land M."/>
            <person name="Hauser L."/>
            <person name="Kyrpides N."/>
            <person name="Mikhailova N."/>
            <person name="Ingram L."/>
            <person name="Richardson P."/>
        </authorList>
    </citation>
    <scope>NUCLEOTIDE SEQUENCE [LARGE SCALE GENOMIC DNA]</scope>
    <source>
        <strain>ATCC 8739 / DSM 1576 / NBRC 3972 / NCIMB 8545 / WDCM 00012 / Crooks</strain>
    </source>
</reference>